<keyword id="KW-0249">Electron transport</keyword>
<keyword id="KW-0472">Membrane</keyword>
<keyword id="KW-0496">Mitochondrion</keyword>
<keyword id="KW-0999">Mitochondrion inner membrane</keyword>
<keyword id="KW-0520">NAD</keyword>
<keyword id="KW-0679">Respiratory chain</keyword>
<keyword id="KW-1278">Translocase</keyword>
<keyword id="KW-0812">Transmembrane</keyword>
<keyword id="KW-1133">Transmembrane helix</keyword>
<keyword id="KW-0813">Transport</keyword>
<keyword id="KW-0830">Ubiquinone</keyword>
<proteinExistence type="inferred from homology"/>
<name>NU4LM_GALPY</name>
<evidence type="ECO:0000250" key="1">
    <source>
        <dbReference type="UniProtKB" id="P03901"/>
    </source>
</evidence>
<evidence type="ECO:0000250" key="2">
    <source>
        <dbReference type="UniProtKB" id="P03902"/>
    </source>
</evidence>
<evidence type="ECO:0000255" key="3"/>
<evidence type="ECO:0000305" key="4"/>
<dbReference type="EC" id="7.1.1.2"/>
<dbReference type="EMBL" id="AY833419">
    <property type="protein sequence ID" value="AAW23992.1"/>
    <property type="molecule type" value="Genomic_DNA"/>
</dbReference>
<dbReference type="RefSeq" id="YP_654270.1">
    <property type="nucleotide sequence ID" value="NC_008156.1"/>
</dbReference>
<dbReference type="SMR" id="Q1EG09"/>
<dbReference type="GeneID" id="4126972"/>
<dbReference type="CTD" id="4539"/>
<dbReference type="GO" id="GO:0005743">
    <property type="term" value="C:mitochondrial inner membrane"/>
    <property type="evidence" value="ECO:0000250"/>
    <property type="project" value="UniProtKB"/>
</dbReference>
<dbReference type="GO" id="GO:0045271">
    <property type="term" value="C:respiratory chain complex I"/>
    <property type="evidence" value="ECO:0000250"/>
    <property type="project" value="UniProtKB"/>
</dbReference>
<dbReference type="GO" id="GO:0008137">
    <property type="term" value="F:NADH dehydrogenase (ubiquinone) activity"/>
    <property type="evidence" value="ECO:0000250"/>
    <property type="project" value="UniProtKB"/>
</dbReference>
<dbReference type="GO" id="GO:0042773">
    <property type="term" value="P:ATP synthesis coupled electron transport"/>
    <property type="evidence" value="ECO:0007669"/>
    <property type="project" value="InterPro"/>
</dbReference>
<dbReference type="FunFam" id="1.10.287.3510:FF:000002">
    <property type="entry name" value="NADH-ubiquinone oxidoreductase chain 4L"/>
    <property type="match status" value="1"/>
</dbReference>
<dbReference type="Gene3D" id="1.10.287.3510">
    <property type="match status" value="1"/>
</dbReference>
<dbReference type="InterPro" id="IPR001133">
    <property type="entry name" value="NADH_UbQ_OxRdtase_chain4L/K"/>
</dbReference>
<dbReference type="InterPro" id="IPR039428">
    <property type="entry name" value="NUOK/Mnh_C1-like"/>
</dbReference>
<dbReference type="PANTHER" id="PTHR11434:SF0">
    <property type="entry name" value="NADH-UBIQUINONE OXIDOREDUCTASE CHAIN 4L"/>
    <property type="match status" value="1"/>
</dbReference>
<dbReference type="PANTHER" id="PTHR11434">
    <property type="entry name" value="NADH-UBIQUINONE OXIDOREDUCTASE SUBUNIT ND4L"/>
    <property type="match status" value="1"/>
</dbReference>
<dbReference type="Pfam" id="PF00420">
    <property type="entry name" value="Oxidored_q2"/>
    <property type="match status" value="1"/>
</dbReference>
<geneLocation type="mitochondrion"/>
<comment type="function">
    <text evidence="1">Core subunit of the mitochondrial membrane respiratory chain NADH dehydrogenase (Complex I) which catalyzes electron transfer from NADH through the respiratory chain, using ubiquinone as an electron acceptor. Part of the enzyme membrane arm which is embedded in the lipid bilayer and involved in proton translocation.</text>
</comment>
<comment type="catalytic activity">
    <reaction evidence="1">
        <text>a ubiquinone + NADH + 5 H(+)(in) = a ubiquinol + NAD(+) + 4 H(+)(out)</text>
        <dbReference type="Rhea" id="RHEA:29091"/>
        <dbReference type="Rhea" id="RHEA-COMP:9565"/>
        <dbReference type="Rhea" id="RHEA-COMP:9566"/>
        <dbReference type="ChEBI" id="CHEBI:15378"/>
        <dbReference type="ChEBI" id="CHEBI:16389"/>
        <dbReference type="ChEBI" id="CHEBI:17976"/>
        <dbReference type="ChEBI" id="CHEBI:57540"/>
        <dbReference type="ChEBI" id="CHEBI:57945"/>
        <dbReference type="EC" id="7.1.1.2"/>
    </reaction>
    <physiologicalReaction direction="left-to-right" evidence="1">
        <dbReference type="Rhea" id="RHEA:29092"/>
    </physiologicalReaction>
</comment>
<comment type="subunit">
    <text evidence="2">Core subunit of respiratory chain NADH dehydrogenase (Complex I) which is composed of 45 different subunits.</text>
</comment>
<comment type="subcellular location">
    <subcellularLocation>
        <location evidence="2">Mitochondrion inner membrane</location>
        <topology evidence="3">Multi-pass membrane protein</topology>
    </subcellularLocation>
</comment>
<comment type="similarity">
    <text evidence="4">Belongs to the complex I subunit 4L family.</text>
</comment>
<reference key="1">
    <citation type="journal article" date="2006" name="Gene">
        <title>On the phylogenetic position of a rare Iberian endemic mammal, the Pyrenean desman (Galemys pyrenaicus).</title>
        <authorList>
            <person name="Cabria M.T."/>
            <person name="Rubines J."/>
            <person name="Gomez-Moliner B."/>
            <person name="Zardoya R."/>
        </authorList>
    </citation>
    <scope>NUCLEOTIDE SEQUENCE [GENOMIC DNA]</scope>
</reference>
<protein>
    <recommendedName>
        <fullName>NADH-ubiquinone oxidoreductase chain 4L</fullName>
        <ecNumber>7.1.1.2</ecNumber>
    </recommendedName>
    <alternativeName>
        <fullName>NADH dehydrogenase subunit 4L</fullName>
    </alternativeName>
</protein>
<accession>Q1EG09</accession>
<sequence length="98" mass="10773">MSLVYVNIMIAFSVSFLGLLMFRSHLMSSLLCLEGMMLSLFILGTILILNFHFTLASMAPIIMLVFAACEAAVGLSLLVMVSNTYGVDYVQNLNLLQC</sequence>
<feature type="chain" id="PRO_0000275021" description="NADH-ubiquinone oxidoreductase chain 4L">
    <location>
        <begin position="1"/>
        <end position="98"/>
    </location>
</feature>
<feature type="transmembrane region" description="Helical" evidence="3">
    <location>
        <begin position="2"/>
        <end position="22"/>
    </location>
</feature>
<feature type="transmembrane region" description="Helical" evidence="3">
    <location>
        <begin position="29"/>
        <end position="49"/>
    </location>
</feature>
<feature type="transmembrane region" description="Helical" evidence="3">
    <location>
        <begin position="61"/>
        <end position="81"/>
    </location>
</feature>
<organism>
    <name type="scientific">Galemys pyrenaicus</name>
    <name type="common">Iberian desman</name>
    <name type="synonym">Pyrenean desman</name>
    <dbReference type="NCBI Taxonomy" id="202257"/>
    <lineage>
        <taxon>Eukaryota</taxon>
        <taxon>Metazoa</taxon>
        <taxon>Chordata</taxon>
        <taxon>Craniata</taxon>
        <taxon>Vertebrata</taxon>
        <taxon>Euteleostomi</taxon>
        <taxon>Mammalia</taxon>
        <taxon>Eutheria</taxon>
        <taxon>Laurasiatheria</taxon>
        <taxon>Eulipotyphla</taxon>
        <taxon>Talpidae</taxon>
        <taxon>Galemys</taxon>
    </lineage>
</organism>
<gene>
    <name type="primary">MT-ND4L</name>
    <name type="synonym">MTND4L</name>
    <name type="synonym">NADH4L</name>
    <name type="synonym">ND4L</name>
</gene>